<name>PDXT_BACC4</name>
<comment type="function">
    <text evidence="1">Catalyzes the hydrolysis of glutamine to glutamate and ammonia as part of the biosynthesis of pyridoxal 5'-phosphate. The resulting ammonia molecule is channeled to the active site of PdxS.</text>
</comment>
<comment type="catalytic activity">
    <reaction evidence="1">
        <text>aldehydo-D-ribose 5-phosphate + D-glyceraldehyde 3-phosphate + L-glutamine = pyridoxal 5'-phosphate + L-glutamate + phosphate + 3 H2O + H(+)</text>
        <dbReference type="Rhea" id="RHEA:31507"/>
        <dbReference type="ChEBI" id="CHEBI:15377"/>
        <dbReference type="ChEBI" id="CHEBI:15378"/>
        <dbReference type="ChEBI" id="CHEBI:29985"/>
        <dbReference type="ChEBI" id="CHEBI:43474"/>
        <dbReference type="ChEBI" id="CHEBI:58273"/>
        <dbReference type="ChEBI" id="CHEBI:58359"/>
        <dbReference type="ChEBI" id="CHEBI:59776"/>
        <dbReference type="ChEBI" id="CHEBI:597326"/>
        <dbReference type="EC" id="4.3.3.6"/>
    </reaction>
</comment>
<comment type="catalytic activity">
    <reaction evidence="1">
        <text>L-glutamine + H2O = L-glutamate + NH4(+)</text>
        <dbReference type="Rhea" id="RHEA:15889"/>
        <dbReference type="ChEBI" id="CHEBI:15377"/>
        <dbReference type="ChEBI" id="CHEBI:28938"/>
        <dbReference type="ChEBI" id="CHEBI:29985"/>
        <dbReference type="ChEBI" id="CHEBI:58359"/>
        <dbReference type="EC" id="3.5.1.2"/>
    </reaction>
</comment>
<comment type="pathway">
    <text evidence="1">Cofactor biosynthesis; pyridoxal 5'-phosphate biosynthesis.</text>
</comment>
<comment type="subunit">
    <text evidence="1">In the presence of PdxS, forms a dodecamer of heterodimers. Only shows activity in the heterodimer.</text>
</comment>
<comment type="similarity">
    <text evidence="1">Belongs to the glutaminase PdxT/SNO family.</text>
</comment>
<proteinExistence type="inferred from homology"/>
<evidence type="ECO:0000255" key="1">
    <source>
        <dbReference type="HAMAP-Rule" id="MF_01615"/>
    </source>
</evidence>
<accession>B7HII4</accession>
<sequence>MVKIGVLGLQGAVREHVKSVEASGAEAVVVKRIEQLEEIDGLILPGGESTTMRRLIDKYAFMEPLRTFAKSGKPMFGTCAGMILLAKTLIGYEEAHIGAMDITVERNAFGRQKDSFEAALSIEGVGEDFVGVFIRAPYVVEVADNVEVLSKHGNRMVAVRQDQFLAASFHPELTDDHRVTAYFVEMVKEAKMKKVV</sequence>
<reference key="1">
    <citation type="submission" date="2008-10" db="EMBL/GenBank/DDBJ databases">
        <title>Genome sequence of Bacillus cereus B4264.</title>
        <authorList>
            <person name="Dodson R.J."/>
            <person name="Durkin A.S."/>
            <person name="Rosovitz M.J."/>
            <person name="Rasko D.A."/>
            <person name="Hoffmaster A."/>
            <person name="Ravel J."/>
            <person name="Sutton G."/>
        </authorList>
    </citation>
    <scope>NUCLEOTIDE SEQUENCE [LARGE SCALE GENOMIC DNA]</scope>
    <source>
        <strain>B4264</strain>
    </source>
</reference>
<protein>
    <recommendedName>
        <fullName evidence="1">Pyridoxal 5'-phosphate synthase subunit PdxT</fullName>
        <ecNumber evidence="1">4.3.3.6</ecNumber>
    </recommendedName>
    <alternativeName>
        <fullName evidence="1">Pdx2</fullName>
    </alternativeName>
    <alternativeName>
        <fullName evidence="1">Pyridoxal 5'-phosphate synthase glutaminase subunit</fullName>
        <ecNumber evidence="1">3.5.1.2</ecNumber>
    </alternativeName>
</protein>
<dbReference type="EC" id="4.3.3.6" evidence="1"/>
<dbReference type="EC" id="3.5.1.2" evidence="1"/>
<dbReference type="EMBL" id="CP001176">
    <property type="protein sequence ID" value="ACK62383.1"/>
    <property type="molecule type" value="Genomic_DNA"/>
</dbReference>
<dbReference type="RefSeq" id="WP_000238788.1">
    <property type="nucleotide sequence ID" value="NC_011725.1"/>
</dbReference>
<dbReference type="SMR" id="B7HII4"/>
<dbReference type="MEROPS" id="C26.A32"/>
<dbReference type="KEGG" id="bcb:BCB4264_A0015"/>
<dbReference type="HOGENOM" id="CLU_069674_2_0_9"/>
<dbReference type="UniPathway" id="UPA00245"/>
<dbReference type="Proteomes" id="UP000007096">
    <property type="component" value="Chromosome"/>
</dbReference>
<dbReference type="GO" id="GO:0005829">
    <property type="term" value="C:cytosol"/>
    <property type="evidence" value="ECO:0007669"/>
    <property type="project" value="TreeGrafter"/>
</dbReference>
<dbReference type="GO" id="GO:1903600">
    <property type="term" value="C:glutaminase complex"/>
    <property type="evidence" value="ECO:0007669"/>
    <property type="project" value="TreeGrafter"/>
</dbReference>
<dbReference type="GO" id="GO:0004359">
    <property type="term" value="F:glutaminase activity"/>
    <property type="evidence" value="ECO:0007669"/>
    <property type="project" value="UniProtKB-UniRule"/>
</dbReference>
<dbReference type="GO" id="GO:0036381">
    <property type="term" value="F:pyridoxal 5'-phosphate synthase (glutamine hydrolysing) activity"/>
    <property type="evidence" value="ECO:0007669"/>
    <property type="project" value="UniProtKB-UniRule"/>
</dbReference>
<dbReference type="GO" id="GO:0006543">
    <property type="term" value="P:glutamine catabolic process"/>
    <property type="evidence" value="ECO:0007669"/>
    <property type="project" value="UniProtKB-UniRule"/>
</dbReference>
<dbReference type="GO" id="GO:0042823">
    <property type="term" value="P:pyridoxal phosphate biosynthetic process"/>
    <property type="evidence" value="ECO:0007669"/>
    <property type="project" value="UniProtKB-UniRule"/>
</dbReference>
<dbReference type="GO" id="GO:0008614">
    <property type="term" value="P:pyridoxine metabolic process"/>
    <property type="evidence" value="ECO:0007669"/>
    <property type="project" value="TreeGrafter"/>
</dbReference>
<dbReference type="CDD" id="cd01749">
    <property type="entry name" value="GATase1_PB"/>
    <property type="match status" value="1"/>
</dbReference>
<dbReference type="FunFam" id="3.40.50.880:FF:000010">
    <property type="entry name" value="uncharacterized protein LOC100176842 isoform X2"/>
    <property type="match status" value="1"/>
</dbReference>
<dbReference type="Gene3D" id="3.40.50.880">
    <property type="match status" value="1"/>
</dbReference>
<dbReference type="HAMAP" id="MF_01615">
    <property type="entry name" value="PdxT"/>
    <property type="match status" value="1"/>
</dbReference>
<dbReference type="InterPro" id="IPR029062">
    <property type="entry name" value="Class_I_gatase-like"/>
</dbReference>
<dbReference type="InterPro" id="IPR002161">
    <property type="entry name" value="PdxT/SNO"/>
</dbReference>
<dbReference type="InterPro" id="IPR021196">
    <property type="entry name" value="PdxT/SNO_CS"/>
</dbReference>
<dbReference type="NCBIfam" id="TIGR03800">
    <property type="entry name" value="PLP_synth_Pdx2"/>
    <property type="match status" value="1"/>
</dbReference>
<dbReference type="PANTHER" id="PTHR31559">
    <property type="entry name" value="PYRIDOXAL 5'-PHOSPHATE SYNTHASE SUBUNIT SNO"/>
    <property type="match status" value="1"/>
</dbReference>
<dbReference type="PANTHER" id="PTHR31559:SF0">
    <property type="entry name" value="PYRIDOXAL 5'-PHOSPHATE SYNTHASE SUBUNIT SNO1-RELATED"/>
    <property type="match status" value="1"/>
</dbReference>
<dbReference type="Pfam" id="PF01174">
    <property type="entry name" value="SNO"/>
    <property type="match status" value="1"/>
</dbReference>
<dbReference type="PIRSF" id="PIRSF005639">
    <property type="entry name" value="Glut_amidoT_SNO"/>
    <property type="match status" value="1"/>
</dbReference>
<dbReference type="SUPFAM" id="SSF52317">
    <property type="entry name" value="Class I glutamine amidotransferase-like"/>
    <property type="match status" value="1"/>
</dbReference>
<dbReference type="PROSITE" id="PS01236">
    <property type="entry name" value="PDXT_SNO_1"/>
    <property type="match status" value="1"/>
</dbReference>
<dbReference type="PROSITE" id="PS51130">
    <property type="entry name" value="PDXT_SNO_2"/>
    <property type="match status" value="1"/>
</dbReference>
<gene>
    <name evidence="1" type="primary">pdxT</name>
    <name type="ordered locus">BCB4264_A0015</name>
</gene>
<organism>
    <name type="scientific">Bacillus cereus (strain B4264)</name>
    <dbReference type="NCBI Taxonomy" id="405532"/>
    <lineage>
        <taxon>Bacteria</taxon>
        <taxon>Bacillati</taxon>
        <taxon>Bacillota</taxon>
        <taxon>Bacilli</taxon>
        <taxon>Bacillales</taxon>
        <taxon>Bacillaceae</taxon>
        <taxon>Bacillus</taxon>
        <taxon>Bacillus cereus group</taxon>
    </lineage>
</organism>
<keyword id="KW-0315">Glutamine amidotransferase</keyword>
<keyword id="KW-0378">Hydrolase</keyword>
<keyword id="KW-0456">Lyase</keyword>
<keyword id="KW-0663">Pyridoxal phosphate</keyword>
<feature type="chain" id="PRO_1000185875" description="Pyridoxal 5'-phosphate synthase subunit PdxT">
    <location>
        <begin position="1"/>
        <end position="196"/>
    </location>
</feature>
<feature type="active site" description="Nucleophile" evidence="1">
    <location>
        <position position="79"/>
    </location>
</feature>
<feature type="active site" description="Charge relay system" evidence="1">
    <location>
        <position position="170"/>
    </location>
</feature>
<feature type="active site" description="Charge relay system" evidence="1">
    <location>
        <position position="172"/>
    </location>
</feature>
<feature type="binding site" evidence="1">
    <location>
        <begin position="47"/>
        <end position="49"/>
    </location>
    <ligand>
        <name>L-glutamine</name>
        <dbReference type="ChEBI" id="CHEBI:58359"/>
    </ligand>
</feature>
<feature type="binding site" evidence="1">
    <location>
        <position position="106"/>
    </location>
    <ligand>
        <name>L-glutamine</name>
        <dbReference type="ChEBI" id="CHEBI:58359"/>
    </ligand>
</feature>
<feature type="binding site" evidence="1">
    <location>
        <begin position="134"/>
        <end position="135"/>
    </location>
    <ligand>
        <name>L-glutamine</name>
        <dbReference type="ChEBI" id="CHEBI:58359"/>
    </ligand>
</feature>